<sequence>MFAIIETGGKQIKVEEGQEIFVEKLDVNEGDTFTFDKVLFVGGDSVKVGAPTVEGATVTATVNKQGRGKKITVFTYKRRKNSKRKKGHRQPYTKLTIDKINA</sequence>
<proteinExistence type="inferred from homology"/>
<feature type="chain" id="PRO_0000224933" description="Large ribosomal subunit protein bL21">
    <location>
        <begin position="1"/>
        <end position="102"/>
    </location>
</feature>
<feature type="region of interest" description="Disordered" evidence="2">
    <location>
        <begin position="80"/>
        <end position="102"/>
    </location>
</feature>
<feature type="compositionally biased region" description="Basic residues" evidence="2">
    <location>
        <begin position="80"/>
        <end position="91"/>
    </location>
</feature>
<evidence type="ECO:0000255" key="1">
    <source>
        <dbReference type="HAMAP-Rule" id="MF_01363"/>
    </source>
</evidence>
<evidence type="ECO:0000256" key="2">
    <source>
        <dbReference type="SAM" id="MobiDB-lite"/>
    </source>
</evidence>
<evidence type="ECO:0000305" key="3"/>
<accession>Q5HFB6</accession>
<dbReference type="EMBL" id="CP000046">
    <property type="protein sequence ID" value="AAW36808.1"/>
    <property type="molecule type" value="Genomic_DNA"/>
</dbReference>
<dbReference type="RefSeq" id="WP_000457386.1">
    <property type="nucleotide sequence ID" value="NZ_JBGOFO010000003.1"/>
</dbReference>
<dbReference type="SMR" id="Q5HFB6"/>
<dbReference type="GeneID" id="66839833"/>
<dbReference type="KEGG" id="sac:SACOL1702"/>
<dbReference type="HOGENOM" id="CLU_061463_3_2_9"/>
<dbReference type="Proteomes" id="UP000000530">
    <property type="component" value="Chromosome"/>
</dbReference>
<dbReference type="GO" id="GO:0005737">
    <property type="term" value="C:cytoplasm"/>
    <property type="evidence" value="ECO:0007669"/>
    <property type="project" value="UniProtKB-ARBA"/>
</dbReference>
<dbReference type="GO" id="GO:1990904">
    <property type="term" value="C:ribonucleoprotein complex"/>
    <property type="evidence" value="ECO:0007669"/>
    <property type="project" value="UniProtKB-KW"/>
</dbReference>
<dbReference type="GO" id="GO:0005840">
    <property type="term" value="C:ribosome"/>
    <property type="evidence" value="ECO:0007669"/>
    <property type="project" value="UniProtKB-KW"/>
</dbReference>
<dbReference type="GO" id="GO:0019843">
    <property type="term" value="F:rRNA binding"/>
    <property type="evidence" value="ECO:0007669"/>
    <property type="project" value="UniProtKB-UniRule"/>
</dbReference>
<dbReference type="GO" id="GO:0003735">
    <property type="term" value="F:structural constituent of ribosome"/>
    <property type="evidence" value="ECO:0007669"/>
    <property type="project" value="InterPro"/>
</dbReference>
<dbReference type="GO" id="GO:0006412">
    <property type="term" value="P:translation"/>
    <property type="evidence" value="ECO:0007669"/>
    <property type="project" value="UniProtKB-UniRule"/>
</dbReference>
<dbReference type="HAMAP" id="MF_01363">
    <property type="entry name" value="Ribosomal_bL21"/>
    <property type="match status" value="1"/>
</dbReference>
<dbReference type="InterPro" id="IPR028909">
    <property type="entry name" value="bL21-like"/>
</dbReference>
<dbReference type="InterPro" id="IPR036164">
    <property type="entry name" value="bL21-like_sf"/>
</dbReference>
<dbReference type="InterPro" id="IPR001787">
    <property type="entry name" value="Ribosomal_bL21"/>
</dbReference>
<dbReference type="NCBIfam" id="TIGR00061">
    <property type="entry name" value="L21"/>
    <property type="match status" value="1"/>
</dbReference>
<dbReference type="PANTHER" id="PTHR21349">
    <property type="entry name" value="50S RIBOSOMAL PROTEIN L21"/>
    <property type="match status" value="1"/>
</dbReference>
<dbReference type="PANTHER" id="PTHR21349:SF0">
    <property type="entry name" value="LARGE RIBOSOMAL SUBUNIT PROTEIN BL21M"/>
    <property type="match status" value="1"/>
</dbReference>
<dbReference type="Pfam" id="PF00829">
    <property type="entry name" value="Ribosomal_L21p"/>
    <property type="match status" value="1"/>
</dbReference>
<dbReference type="SUPFAM" id="SSF141091">
    <property type="entry name" value="L21p-like"/>
    <property type="match status" value="1"/>
</dbReference>
<keyword id="KW-0687">Ribonucleoprotein</keyword>
<keyword id="KW-0689">Ribosomal protein</keyword>
<keyword id="KW-0694">RNA-binding</keyword>
<keyword id="KW-0699">rRNA-binding</keyword>
<name>RL21_STAAC</name>
<gene>
    <name evidence="1" type="primary">rplU</name>
    <name type="ordered locus">SACOL1702</name>
</gene>
<reference key="1">
    <citation type="journal article" date="2005" name="J. Bacteriol.">
        <title>Insights on evolution of virulence and resistance from the complete genome analysis of an early methicillin-resistant Staphylococcus aureus strain and a biofilm-producing methicillin-resistant Staphylococcus epidermidis strain.</title>
        <authorList>
            <person name="Gill S.R."/>
            <person name="Fouts D.E."/>
            <person name="Archer G.L."/>
            <person name="Mongodin E.F."/>
            <person name="DeBoy R.T."/>
            <person name="Ravel J."/>
            <person name="Paulsen I.T."/>
            <person name="Kolonay J.F."/>
            <person name="Brinkac L.M."/>
            <person name="Beanan M.J."/>
            <person name="Dodson R.J."/>
            <person name="Daugherty S.C."/>
            <person name="Madupu R."/>
            <person name="Angiuoli S.V."/>
            <person name="Durkin A.S."/>
            <person name="Haft D.H."/>
            <person name="Vamathevan J.J."/>
            <person name="Khouri H."/>
            <person name="Utterback T.R."/>
            <person name="Lee C."/>
            <person name="Dimitrov G."/>
            <person name="Jiang L."/>
            <person name="Qin H."/>
            <person name="Weidman J."/>
            <person name="Tran K."/>
            <person name="Kang K.H."/>
            <person name="Hance I.R."/>
            <person name="Nelson K.E."/>
            <person name="Fraser C.M."/>
        </authorList>
    </citation>
    <scope>NUCLEOTIDE SEQUENCE [LARGE SCALE GENOMIC DNA]</scope>
    <source>
        <strain>COL</strain>
    </source>
</reference>
<protein>
    <recommendedName>
        <fullName evidence="1">Large ribosomal subunit protein bL21</fullName>
    </recommendedName>
    <alternativeName>
        <fullName evidence="3">50S ribosomal protein L21</fullName>
    </alternativeName>
</protein>
<organism>
    <name type="scientific">Staphylococcus aureus (strain COL)</name>
    <dbReference type="NCBI Taxonomy" id="93062"/>
    <lineage>
        <taxon>Bacteria</taxon>
        <taxon>Bacillati</taxon>
        <taxon>Bacillota</taxon>
        <taxon>Bacilli</taxon>
        <taxon>Bacillales</taxon>
        <taxon>Staphylococcaceae</taxon>
        <taxon>Staphylococcus</taxon>
    </lineage>
</organism>
<comment type="function">
    <text evidence="1">This protein binds to 23S rRNA in the presence of protein L20.</text>
</comment>
<comment type="subunit">
    <text evidence="1">Part of the 50S ribosomal subunit. Contacts protein L20.</text>
</comment>
<comment type="similarity">
    <text evidence="1">Belongs to the bacterial ribosomal protein bL21 family.</text>
</comment>